<feature type="chain" id="PRO_1000143004" description="Large ribosomal subunit protein uL16">
    <location>
        <begin position="1"/>
        <end position="136"/>
    </location>
</feature>
<dbReference type="EMBL" id="AP008981">
    <property type="protein sequence ID" value="BAG40509.1"/>
    <property type="molecule type" value="Genomic_DNA"/>
</dbReference>
<dbReference type="RefSeq" id="WP_012461612.1">
    <property type="nucleotide sequence ID" value="NC_010793.1"/>
</dbReference>
<dbReference type="SMR" id="B3CT12"/>
<dbReference type="GeneID" id="89459050"/>
<dbReference type="KEGG" id="ott:OTT_1051"/>
<dbReference type="HOGENOM" id="CLU_078858_2_1_5"/>
<dbReference type="OrthoDB" id="9802589at2"/>
<dbReference type="Proteomes" id="UP000001033">
    <property type="component" value="Chromosome"/>
</dbReference>
<dbReference type="GO" id="GO:0022625">
    <property type="term" value="C:cytosolic large ribosomal subunit"/>
    <property type="evidence" value="ECO:0007669"/>
    <property type="project" value="TreeGrafter"/>
</dbReference>
<dbReference type="GO" id="GO:0019843">
    <property type="term" value="F:rRNA binding"/>
    <property type="evidence" value="ECO:0007669"/>
    <property type="project" value="UniProtKB-UniRule"/>
</dbReference>
<dbReference type="GO" id="GO:0003735">
    <property type="term" value="F:structural constituent of ribosome"/>
    <property type="evidence" value="ECO:0007669"/>
    <property type="project" value="InterPro"/>
</dbReference>
<dbReference type="GO" id="GO:0000049">
    <property type="term" value="F:tRNA binding"/>
    <property type="evidence" value="ECO:0007669"/>
    <property type="project" value="UniProtKB-KW"/>
</dbReference>
<dbReference type="GO" id="GO:0006412">
    <property type="term" value="P:translation"/>
    <property type="evidence" value="ECO:0007669"/>
    <property type="project" value="UniProtKB-UniRule"/>
</dbReference>
<dbReference type="CDD" id="cd01433">
    <property type="entry name" value="Ribosomal_L16_L10e"/>
    <property type="match status" value="1"/>
</dbReference>
<dbReference type="FunFam" id="3.90.1170.10:FF:000001">
    <property type="entry name" value="50S ribosomal protein L16"/>
    <property type="match status" value="1"/>
</dbReference>
<dbReference type="Gene3D" id="3.90.1170.10">
    <property type="entry name" value="Ribosomal protein L10e/L16"/>
    <property type="match status" value="1"/>
</dbReference>
<dbReference type="HAMAP" id="MF_01342">
    <property type="entry name" value="Ribosomal_uL16"/>
    <property type="match status" value="1"/>
</dbReference>
<dbReference type="InterPro" id="IPR047873">
    <property type="entry name" value="Ribosomal_uL16"/>
</dbReference>
<dbReference type="InterPro" id="IPR000114">
    <property type="entry name" value="Ribosomal_uL16_bact-type"/>
</dbReference>
<dbReference type="InterPro" id="IPR020798">
    <property type="entry name" value="Ribosomal_uL16_CS"/>
</dbReference>
<dbReference type="InterPro" id="IPR016180">
    <property type="entry name" value="Ribosomal_uL16_dom"/>
</dbReference>
<dbReference type="InterPro" id="IPR036920">
    <property type="entry name" value="Ribosomal_uL16_sf"/>
</dbReference>
<dbReference type="NCBIfam" id="TIGR01164">
    <property type="entry name" value="rplP_bact"/>
    <property type="match status" value="1"/>
</dbReference>
<dbReference type="PANTHER" id="PTHR12220">
    <property type="entry name" value="50S/60S RIBOSOMAL PROTEIN L16"/>
    <property type="match status" value="1"/>
</dbReference>
<dbReference type="PANTHER" id="PTHR12220:SF13">
    <property type="entry name" value="LARGE RIBOSOMAL SUBUNIT PROTEIN UL16M"/>
    <property type="match status" value="1"/>
</dbReference>
<dbReference type="Pfam" id="PF00252">
    <property type="entry name" value="Ribosomal_L16"/>
    <property type="match status" value="1"/>
</dbReference>
<dbReference type="PRINTS" id="PR00060">
    <property type="entry name" value="RIBOSOMALL16"/>
</dbReference>
<dbReference type="SUPFAM" id="SSF54686">
    <property type="entry name" value="Ribosomal protein L16p/L10e"/>
    <property type="match status" value="1"/>
</dbReference>
<dbReference type="PROSITE" id="PS00701">
    <property type="entry name" value="RIBOSOMAL_L16_2"/>
    <property type="match status" value="1"/>
</dbReference>
<comment type="function">
    <text evidence="1">Binds 23S rRNA and is also seen to make contacts with the A and possibly P site tRNAs.</text>
</comment>
<comment type="subunit">
    <text evidence="1">Part of the 50S ribosomal subunit.</text>
</comment>
<comment type="similarity">
    <text evidence="1">Belongs to the universal ribosomal protein uL16 family.</text>
</comment>
<reference key="1">
    <citation type="journal article" date="2008" name="DNA Res.">
        <title>The whole-genome sequencing of the obligate intracellular bacterium Orientia tsutsugamushi revealed massive gene amplification during reductive genome evolution.</title>
        <authorList>
            <person name="Nakayama K."/>
            <person name="Yamashita A."/>
            <person name="Kurokawa K."/>
            <person name="Morimoto T."/>
            <person name="Ogawa M."/>
            <person name="Fukuhara M."/>
            <person name="Urakami H."/>
            <person name="Ohnishi M."/>
            <person name="Uchiyama I."/>
            <person name="Ogura Y."/>
            <person name="Ooka T."/>
            <person name="Oshima K."/>
            <person name="Tamura A."/>
            <person name="Hattori M."/>
            <person name="Hayashi T."/>
        </authorList>
    </citation>
    <scope>NUCLEOTIDE SEQUENCE [LARGE SCALE GENOMIC DNA]</scope>
    <source>
        <strain>Ikeda</strain>
    </source>
</reference>
<protein>
    <recommendedName>
        <fullName evidence="1">Large ribosomal subunit protein uL16</fullName>
    </recommendedName>
    <alternativeName>
        <fullName evidence="2">50S ribosomal protein L16</fullName>
    </alternativeName>
</protein>
<name>RL16_ORITI</name>
<keyword id="KW-0687">Ribonucleoprotein</keyword>
<keyword id="KW-0689">Ribosomal protein</keyword>
<keyword id="KW-0694">RNA-binding</keyword>
<keyword id="KW-0699">rRNA-binding</keyword>
<keyword id="KW-0820">tRNA-binding</keyword>
<sequence length="136" mass="15029">MLSPKKQKYRKAQKGRVASKAKAGTMIAFGEFGLKSLDSCRITSRQIEAARRAAVRCMKRQGKFWINIFPSIPVSKKPTEVRMGKGKGATEFFAARVAVGRILFELDGVSEGIAIKALELAGAKLPVRTKIVKRYE</sequence>
<evidence type="ECO:0000255" key="1">
    <source>
        <dbReference type="HAMAP-Rule" id="MF_01342"/>
    </source>
</evidence>
<evidence type="ECO:0000305" key="2"/>
<accession>B3CT12</accession>
<organism>
    <name type="scientific">Orientia tsutsugamushi (strain Ikeda)</name>
    <name type="common">Rickettsia tsutsugamushi</name>
    <dbReference type="NCBI Taxonomy" id="334380"/>
    <lineage>
        <taxon>Bacteria</taxon>
        <taxon>Pseudomonadati</taxon>
        <taxon>Pseudomonadota</taxon>
        <taxon>Alphaproteobacteria</taxon>
        <taxon>Rickettsiales</taxon>
        <taxon>Rickettsiaceae</taxon>
        <taxon>Rickettsieae</taxon>
        <taxon>Orientia</taxon>
    </lineage>
</organism>
<proteinExistence type="inferred from homology"/>
<gene>
    <name evidence="1" type="primary">rplP</name>
    <name type="ordered locus">OTT_1051</name>
</gene>